<accession>Q4FGF6</accession>
<protein>
    <recommendedName>
        <fullName evidence="1">ATP synthase subunit a, chloroplastic</fullName>
    </recommendedName>
    <alternativeName>
        <fullName evidence="1">ATP synthase F0 sector subunit a</fullName>
    </alternativeName>
    <alternativeName>
        <fullName evidence="1">F-ATPase subunit IV</fullName>
    </alternativeName>
</protein>
<organism>
    <name type="scientific">Nuphar advena</name>
    <name type="common">Common spatterdock</name>
    <name type="synonym">Nuphar lutea subsp. advena</name>
    <dbReference type="NCBI Taxonomy" id="77108"/>
    <lineage>
        <taxon>Eukaryota</taxon>
        <taxon>Viridiplantae</taxon>
        <taxon>Streptophyta</taxon>
        <taxon>Embryophyta</taxon>
        <taxon>Tracheophyta</taxon>
        <taxon>Spermatophyta</taxon>
        <taxon>Magnoliopsida</taxon>
        <taxon>Nymphaeales</taxon>
        <taxon>Nymphaeaceae</taxon>
        <taxon>Nuphar</taxon>
    </lineage>
</organism>
<reference key="1">
    <citation type="journal article" date="2005" name="Mol. Biol. Evol.">
        <title>Identifying the basal angiosperm node in chloroplast genome phylogenies: sampling one's way out of the Felsenstein zone.</title>
        <authorList>
            <person name="Leebens-Mack J."/>
            <person name="Raubeson L.A."/>
            <person name="Cui L."/>
            <person name="Kuehl J.V."/>
            <person name="Fourcade M.H."/>
            <person name="Chumley T.W."/>
            <person name="Boore J.L."/>
            <person name="Jansen R.K."/>
            <person name="dePamphilis C.W."/>
        </authorList>
    </citation>
    <scope>NUCLEOTIDE SEQUENCE [GENOMIC DNA]</scope>
</reference>
<reference key="2">
    <citation type="journal article" date="2007" name="BMC Genomics">
        <title>Comparative chloroplast genomics: analyses including new sequences from the angiosperms Nuphar advena and Ranunculus macranthus.</title>
        <authorList>
            <person name="Raubeson L.A."/>
            <person name="Peery R."/>
            <person name="Chumley T.W."/>
            <person name="Dziubek C."/>
            <person name="Fourcade H.M."/>
            <person name="Boore J.L."/>
            <person name="Jansen R.K."/>
        </authorList>
    </citation>
    <scope>NUCLEOTIDE SEQUENCE [LARGE SCALE GENOMIC DNA]</scope>
</reference>
<evidence type="ECO:0000255" key="1">
    <source>
        <dbReference type="HAMAP-Rule" id="MF_01393"/>
    </source>
</evidence>
<name>ATPI_NUPAD</name>
<feature type="chain" id="PRO_0000362577" description="ATP synthase subunit a, chloroplastic">
    <location>
        <begin position="1"/>
        <end position="248"/>
    </location>
</feature>
<feature type="transmembrane region" description="Helical" evidence="1">
    <location>
        <begin position="38"/>
        <end position="58"/>
    </location>
</feature>
<feature type="transmembrane region" description="Helical" evidence="1">
    <location>
        <begin position="96"/>
        <end position="116"/>
    </location>
</feature>
<feature type="transmembrane region" description="Helical" evidence="1">
    <location>
        <begin position="135"/>
        <end position="155"/>
    </location>
</feature>
<feature type="transmembrane region" description="Helical" evidence="1">
    <location>
        <begin position="200"/>
        <end position="220"/>
    </location>
</feature>
<feature type="transmembrane region" description="Helical" evidence="1">
    <location>
        <begin position="221"/>
        <end position="241"/>
    </location>
</feature>
<dbReference type="EMBL" id="DQ069375">
    <property type="protein sequence ID" value="AAZ03819.1"/>
    <property type="molecule type" value="Genomic_DNA"/>
</dbReference>
<dbReference type="EMBL" id="DQ354691">
    <property type="protein sequence ID" value="ABC60446.1"/>
    <property type="molecule type" value="Genomic_DNA"/>
</dbReference>
<dbReference type="RefSeq" id="YP_001001522.1">
    <property type="nucleotide sequence ID" value="NC_008788.1"/>
</dbReference>
<dbReference type="SMR" id="Q4FGF6"/>
<dbReference type="GeneID" id="4699606"/>
<dbReference type="GO" id="GO:0009535">
    <property type="term" value="C:chloroplast thylakoid membrane"/>
    <property type="evidence" value="ECO:0007669"/>
    <property type="project" value="UniProtKB-SubCell"/>
</dbReference>
<dbReference type="GO" id="GO:0005886">
    <property type="term" value="C:plasma membrane"/>
    <property type="evidence" value="ECO:0007669"/>
    <property type="project" value="UniProtKB-UniRule"/>
</dbReference>
<dbReference type="GO" id="GO:0045259">
    <property type="term" value="C:proton-transporting ATP synthase complex"/>
    <property type="evidence" value="ECO:0007669"/>
    <property type="project" value="UniProtKB-KW"/>
</dbReference>
<dbReference type="GO" id="GO:0046933">
    <property type="term" value="F:proton-transporting ATP synthase activity, rotational mechanism"/>
    <property type="evidence" value="ECO:0007669"/>
    <property type="project" value="UniProtKB-UniRule"/>
</dbReference>
<dbReference type="CDD" id="cd00310">
    <property type="entry name" value="ATP-synt_Fo_a_6"/>
    <property type="match status" value="1"/>
</dbReference>
<dbReference type="FunFam" id="1.20.120.220:FF:000001">
    <property type="entry name" value="ATP synthase subunit a, chloroplastic"/>
    <property type="match status" value="1"/>
</dbReference>
<dbReference type="Gene3D" id="1.20.120.220">
    <property type="entry name" value="ATP synthase, F0 complex, subunit A"/>
    <property type="match status" value="1"/>
</dbReference>
<dbReference type="HAMAP" id="MF_01393">
    <property type="entry name" value="ATP_synth_a_bact"/>
    <property type="match status" value="1"/>
</dbReference>
<dbReference type="InterPro" id="IPR045082">
    <property type="entry name" value="ATP_syn_F0_a_bact/chloroplast"/>
</dbReference>
<dbReference type="InterPro" id="IPR000568">
    <property type="entry name" value="ATP_synth_F0_asu"/>
</dbReference>
<dbReference type="InterPro" id="IPR023011">
    <property type="entry name" value="ATP_synth_F0_asu_AS"/>
</dbReference>
<dbReference type="InterPro" id="IPR035908">
    <property type="entry name" value="F0_ATP_A_sf"/>
</dbReference>
<dbReference type="NCBIfam" id="TIGR01131">
    <property type="entry name" value="ATP_synt_6_or_A"/>
    <property type="match status" value="1"/>
</dbReference>
<dbReference type="PANTHER" id="PTHR42823">
    <property type="entry name" value="ATP SYNTHASE SUBUNIT A, CHLOROPLASTIC"/>
    <property type="match status" value="1"/>
</dbReference>
<dbReference type="PANTHER" id="PTHR42823:SF3">
    <property type="entry name" value="ATP SYNTHASE SUBUNIT A, CHLOROPLASTIC"/>
    <property type="match status" value="1"/>
</dbReference>
<dbReference type="Pfam" id="PF00119">
    <property type="entry name" value="ATP-synt_A"/>
    <property type="match status" value="1"/>
</dbReference>
<dbReference type="PRINTS" id="PR00123">
    <property type="entry name" value="ATPASEA"/>
</dbReference>
<dbReference type="SUPFAM" id="SSF81336">
    <property type="entry name" value="F1F0 ATP synthase subunit A"/>
    <property type="match status" value="1"/>
</dbReference>
<dbReference type="PROSITE" id="PS00449">
    <property type="entry name" value="ATPASE_A"/>
    <property type="match status" value="1"/>
</dbReference>
<comment type="function">
    <text evidence="1">Key component of the proton channel; it plays a direct role in the translocation of protons across the membrane.</text>
</comment>
<comment type="subunit">
    <text evidence="1">F-type ATPases have 2 components, CF(1) - the catalytic core - and CF(0) - the membrane proton channel. CF(1) has five subunits: alpha(3), beta(3), gamma(1), delta(1), epsilon(1). CF(0) has four main subunits: a, b, b' and c.</text>
</comment>
<comment type="subcellular location">
    <subcellularLocation>
        <location evidence="1">Plastid</location>
        <location evidence="1">Chloroplast thylakoid membrane</location>
        <topology evidence="1">Multi-pass membrane protein</topology>
    </subcellularLocation>
</comment>
<comment type="similarity">
    <text evidence="1">Belongs to the ATPase A chain family.</text>
</comment>
<geneLocation type="chloroplast"/>
<keyword id="KW-0066">ATP synthesis</keyword>
<keyword id="KW-0138">CF(0)</keyword>
<keyword id="KW-0150">Chloroplast</keyword>
<keyword id="KW-0375">Hydrogen ion transport</keyword>
<keyword id="KW-0406">Ion transport</keyword>
<keyword id="KW-0472">Membrane</keyword>
<keyword id="KW-0934">Plastid</keyword>
<keyword id="KW-0793">Thylakoid</keyword>
<keyword id="KW-0812">Transmembrane</keyword>
<keyword id="KW-1133">Transmembrane helix</keyword>
<keyword id="KW-0813">Transport</keyword>
<proteinExistence type="inferred from homology"/>
<sequence length="248" mass="27242">MNVLPCSINTLKGLYEISGVEVGQHFYWQIGGFQVHAQVLITSWVVIAILLGSAAIAVRNPQTIPTDGQNFFEYVLEFIRDVSKTQIGEEEYGPWVPFIGTLFLFIFVSNWSGALLPWRIIQLPHGELAAPTNDINTTVALALLTSVAYFYAGLTKKGLGYFGKYIQPTPILLPINVLEDFTKPLSLSFRLFGNILADELVVVVLVSLVPLVIPIPVMFLGLFTSGIQALIFATLAAAYIGESMEGHH</sequence>
<gene>
    <name evidence="1" type="primary">atpI</name>
</gene>